<name>RL16_LEPCP</name>
<protein>
    <recommendedName>
        <fullName evidence="1">Large ribosomal subunit protein uL16</fullName>
    </recommendedName>
    <alternativeName>
        <fullName evidence="3">50S ribosomal protein L16</fullName>
    </alternativeName>
</protein>
<proteinExistence type="inferred from homology"/>
<reference key="1">
    <citation type="submission" date="2008-03" db="EMBL/GenBank/DDBJ databases">
        <title>Complete sequence of Leptothrix cholodnii SP-6.</title>
        <authorList>
            <consortium name="US DOE Joint Genome Institute"/>
            <person name="Copeland A."/>
            <person name="Lucas S."/>
            <person name="Lapidus A."/>
            <person name="Glavina del Rio T."/>
            <person name="Dalin E."/>
            <person name="Tice H."/>
            <person name="Bruce D."/>
            <person name="Goodwin L."/>
            <person name="Pitluck S."/>
            <person name="Chertkov O."/>
            <person name="Brettin T."/>
            <person name="Detter J.C."/>
            <person name="Han C."/>
            <person name="Kuske C.R."/>
            <person name="Schmutz J."/>
            <person name="Larimer F."/>
            <person name="Land M."/>
            <person name="Hauser L."/>
            <person name="Kyrpides N."/>
            <person name="Lykidis A."/>
            <person name="Emerson D."/>
            <person name="Richardson P."/>
        </authorList>
    </citation>
    <scope>NUCLEOTIDE SEQUENCE [LARGE SCALE GENOMIC DNA]</scope>
    <source>
        <strain>ATCC 51168 / LMG 8142 / SP-6</strain>
    </source>
</reference>
<organism>
    <name type="scientific">Leptothrix cholodnii (strain ATCC 51168 / LMG 8142 / SP-6)</name>
    <name type="common">Leptothrix discophora (strain SP-6)</name>
    <dbReference type="NCBI Taxonomy" id="395495"/>
    <lineage>
        <taxon>Bacteria</taxon>
        <taxon>Pseudomonadati</taxon>
        <taxon>Pseudomonadota</taxon>
        <taxon>Betaproteobacteria</taxon>
        <taxon>Burkholderiales</taxon>
        <taxon>Sphaerotilaceae</taxon>
        <taxon>Leptothrix</taxon>
    </lineage>
</organism>
<sequence>MLQPSRRKFRKEQKGRNTGVATRGANVSFGEFGLKATERGRLTARQIEAARRAISRHIKRGGRIFIRIFPDKPISQKPAEVRMGNGKGNPEYYVAEIQPGKVLYELNGVPEDLAREAFTLAAAKLPLRTTFVTRMFGT</sequence>
<accession>B1Y8I0</accession>
<comment type="function">
    <text evidence="1">Binds 23S rRNA and is also seen to make contacts with the A and possibly P site tRNAs.</text>
</comment>
<comment type="subunit">
    <text evidence="1">Part of the 50S ribosomal subunit.</text>
</comment>
<comment type="similarity">
    <text evidence="1">Belongs to the universal ribosomal protein uL16 family.</text>
</comment>
<gene>
    <name evidence="1" type="primary">rplP</name>
    <name type="ordered locus">Lcho_3992</name>
</gene>
<keyword id="KW-1185">Reference proteome</keyword>
<keyword id="KW-0687">Ribonucleoprotein</keyword>
<keyword id="KW-0689">Ribosomal protein</keyword>
<keyword id="KW-0694">RNA-binding</keyword>
<keyword id="KW-0699">rRNA-binding</keyword>
<keyword id="KW-0820">tRNA-binding</keyword>
<feature type="chain" id="PRO_1000142991" description="Large ribosomal subunit protein uL16">
    <location>
        <begin position="1"/>
        <end position="138"/>
    </location>
</feature>
<feature type="region of interest" description="Disordered" evidence="2">
    <location>
        <begin position="1"/>
        <end position="20"/>
    </location>
</feature>
<feature type="compositionally biased region" description="Basic residues" evidence="2">
    <location>
        <begin position="1"/>
        <end position="13"/>
    </location>
</feature>
<evidence type="ECO:0000255" key="1">
    <source>
        <dbReference type="HAMAP-Rule" id="MF_01342"/>
    </source>
</evidence>
<evidence type="ECO:0000256" key="2">
    <source>
        <dbReference type="SAM" id="MobiDB-lite"/>
    </source>
</evidence>
<evidence type="ECO:0000305" key="3"/>
<dbReference type="EMBL" id="CP001013">
    <property type="protein sequence ID" value="ACB36246.1"/>
    <property type="molecule type" value="Genomic_DNA"/>
</dbReference>
<dbReference type="RefSeq" id="WP_012348991.1">
    <property type="nucleotide sequence ID" value="NC_010524.1"/>
</dbReference>
<dbReference type="SMR" id="B1Y8I0"/>
<dbReference type="STRING" id="395495.Lcho_3992"/>
<dbReference type="KEGG" id="lch:Lcho_3992"/>
<dbReference type="eggNOG" id="COG0197">
    <property type="taxonomic scope" value="Bacteria"/>
</dbReference>
<dbReference type="HOGENOM" id="CLU_078858_2_1_4"/>
<dbReference type="OrthoDB" id="9802589at2"/>
<dbReference type="Proteomes" id="UP000001693">
    <property type="component" value="Chromosome"/>
</dbReference>
<dbReference type="GO" id="GO:0022625">
    <property type="term" value="C:cytosolic large ribosomal subunit"/>
    <property type="evidence" value="ECO:0007669"/>
    <property type="project" value="TreeGrafter"/>
</dbReference>
<dbReference type="GO" id="GO:0019843">
    <property type="term" value="F:rRNA binding"/>
    <property type="evidence" value="ECO:0007669"/>
    <property type="project" value="UniProtKB-UniRule"/>
</dbReference>
<dbReference type="GO" id="GO:0003735">
    <property type="term" value="F:structural constituent of ribosome"/>
    <property type="evidence" value="ECO:0007669"/>
    <property type="project" value="InterPro"/>
</dbReference>
<dbReference type="GO" id="GO:0000049">
    <property type="term" value="F:tRNA binding"/>
    <property type="evidence" value="ECO:0007669"/>
    <property type="project" value="UniProtKB-KW"/>
</dbReference>
<dbReference type="GO" id="GO:0006412">
    <property type="term" value="P:translation"/>
    <property type="evidence" value="ECO:0007669"/>
    <property type="project" value="UniProtKB-UniRule"/>
</dbReference>
<dbReference type="CDD" id="cd01433">
    <property type="entry name" value="Ribosomal_L16_L10e"/>
    <property type="match status" value="1"/>
</dbReference>
<dbReference type="FunFam" id="3.90.1170.10:FF:000001">
    <property type="entry name" value="50S ribosomal protein L16"/>
    <property type="match status" value="1"/>
</dbReference>
<dbReference type="Gene3D" id="3.90.1170.10">
    <property type="entry name" value="Ribosomal protein L10e/L16"/>
    <property type="match status" value="1"/>
</dbReference>
<dbReference type="HAMAP" id="MF_01342">
    <property type="entry name" value="Ribosomal_uL16"/>
    <property type="match status" value="1"/>
</dbReference>
<dbReference type="InterPro" id="IPR047873">
    <property type="entry name" value="Ribosomal_uL16"/>
</dbReference>
<dbReference type="InterPro" id="IPR000114">
    <property type="entry name" value="Ribosomal_uL16_bact-type"/>
</dbReference>
<dbReference type="InterPro" id="IPR016180">
    <property type="entry name" value="Ribosomal_uL16_dom"/>
</dbReference>
<dbReference type="InterPro" id="IPR036920">
    <property type="entry name" value="Ribosomal_uL16_sf"/>
</dbReference>
<dbReference type="NCBIfam" id="TIGR01164">
    <property type="entry name" value="rplP_bact"/>
    <property type="match status" value="1"/>
</dbReference>
<dbReference type="PANTHER" id="PTHR12220">
    <property type="entry name" value="50S/60S RIBOSOMAL PROTEIN L16"/>
    <property type="match status" value="1"/>
</dbReference>
<dbReference type="PANTHER" id="PTHR12220:SF13">
    <property type="entry name" value="LARGE RIBOSOMAL SUBUNIT PROTEIN UL16M"/>
    <property type="match status" value="1"/>
</dbReference>
<dbReference type="Pfam" id="PF00252">
    <property type="entry name" value="Ribosomal_L16"/>
    <property type="match status" value="1"/>
</dbReference>
<dbReference type="PRINTS" id="PR00060">
    <property type="entry name" value="RIBOSOMALL16"/>
</dbReference>
<dbReference type="SUPFAM" id="SSF54686">
    <property type="entry name" value="Ribosomal protein L16p/L10e"/>
    <property type="match status" value="1"/>
</dbReference>